<name>Y1426_METTH</name>
<reference key="1">
    <citation type="journal article" date="1997" name="J. Bacteriol.">
        <title>Complete genome sequence of Methanobacterium thermoautotrophicum deltaH: functional analysis and comparative genomics.</title>
        <authorList>
            <person name="Smith D.R."/>
            <person name="Doucette-Stamm L.A."/>
            <person name="Deloughery C."/>
            <person name="Lee H.-M."/>
            <person name="Dubois J."/>
            <person name="Aldredge T."/>
            <person name="Bashirzadeh R."/>
            <person name="Blakely D."/>
            <person name="Cook R."/>
            <person name="Gilbert K."/>
            <person name="Harrison D."/>
            <person name="Hoang L."/>
            <person name="Keagle P."/>
            <person name="Lumm W."/>
            <person name="Pothier B."/>
            <person name="Qiu D."/>
            <person name="Spadafora R."/>
            <person name="Vicare R."/>
            <person name="Wang Y."/>
            <person name="Wierzbowski J."/>
            <person name="Gibson R."/>
            <person name="Jiwani N."/>
            <person name="Caruso A."/>
            <person name="Bush D."/>
            <person name="Safer H."/>
            <person name="Patwell D."/>
            <person name="Prabhakar S."/>
            <person name="McDougall S."/>
            <person name="Shimer G."/>
            <person name="Goyal A."/>
            <person name="Pietrovski S."/>
            <person name="Church G.M."/>
            <person name="Daniels C.J."/>
            <person name="Mao J.-I."/>
            <person name="Rice P."/>
            <person name="Noelling J."/>
            <person name="Reeve J.N."/>
        </authorList>
    </citation>
    <scope>NUCLEOTIDE SEQUENCE [LARGE SCALE GENOMIC DNA]</scope>
    <source>
        <strain>ATCC 29096 / DSM 1053 / JCM 10044 / NBRC 100330 / Delta H</strain>
    </source>
</reference>
<keyword id="KW-1185">Reference proteome</keyword>
<sequence length="359" mass="37701">MEMFDGLKIYGSGNYLEGVTDRDSLFICAVATTETSRIPGITGAGASPELTEYTPAADVELIVHDAPRCLPEIPQTIVEGEAAPTPAVITKAALELAEVPFMVADAGASVKPDVPYININSEPGGDIRTGRAVTEPQRIYERGLMVGRTLSSLTEHLVVGESTPAGTTTALGVLTALGYDADFRVSASMPHNPHDLKREVVMAGLSNAGIEKGDCSREPFRAVEAVGDPMIPAVAGICMGSTVPVTLAGGTQMTAVCALMRAIDPDFDFSDTAIATTIFVAEDSTSDINRIAEQIGDIDIYVVDPDFGSASHRGLHEYLNGSVKEGVGAGGAMLLALLHGIPVEMVRERIEELCNTILA</sequence>
<protein>
    <recommendedName>
        <fullName evidence="1">UPF0284 protein MTH_1426</fullName>
    </recommendedName>
</protein>
<evidence type="ECO:0000255" key="1">
    <source>
        <dbReference type="HAMAP-Rule" id="MF_01086"/>
    </source>
</evidence>
<dbReference type="EMBL" id="AE000666">
    <property type="protein sequence ID" value="AAB85903.1"/>
    <property type="molecule type" value="Genomic_DNA"/>
</dbReference>
<dbReference type="PIR" id="A69057">
    <property type="entry name" value="A69057"/>
</dbReference>
<dbReference type="SMR" id="O27477"/>
<dbReference type="STRING" id="187420.MTH_1426"/>
<dbReference type="PaxDb" id="187420-MTH_1426"/>
<dbReference type="EnsemblBacteria" id="AAB85903">
    <property type="protein sequence ID" value="AAB85903"/>
    <property type="gene ID" value="MTH_1426"/>
</dbReference>
<dbReference type="KEGG" id="mth:MTH_1426"/>
<dbReference type="PATRIC" id="fig|187420.15.peg.1390"/>
<dbReference type="HOGENOM" id="CLU_053134_0_0_2"/>
<dbReference type="InParanoid" id="O27477"/>
<dbReference type="Proteomes" id="UP000005223">
    <property type="component" value="Chromosome"/>
</dbReference>
<dbReference type="GO" id="GO:0008939">
    <property type="term" value="F:nicotinate-nucleotide-dimethylbenzimidazole phosphoribosyltransferase activity"/>
    <property type="evidence" value="ECO:0007669"/>
    <property type="project" value="InterPro"/>
</dbReference>
<dbReference type="CDD" id="cd02439">
    <property type="entry name" value="DMB-PRT_CobT"/>
    <property type="match status" value="1"/>
</dbReference>
<dbReference type="Gene3D" id="3.40.50.10210">
    <property type="match status" value="1"/>
</dbReference>
<dbReference type="HAMAP" id="MF_01086">
    <property type="entry name" value="UPF0284"/>
    <property type="match status" value="1"/>
</dbReference>
<dbReference type="InterPro" id="IPR003200">
    <property type="entry name" value="Nict_dMeBzImd_PRibTrfase"/>
</dbReference>
<dbReference type="InterPro" id="IPR002805">
    <property type="entry name" value="Nict_dMeBzImd_PRibTrfase_arc"/>
</dbReference>
<dbReference type="InterPro" id="IPR036087">
    <property type="entry name" value="Nict_dMeBzImd_PRibTrfase_sf"/>
</dbReference>
<dbReference type="NCBIfam" id="TIGR00303">
    <property type="entry name" value="nicotinate mononucleotide-dependent phosphoribosyltransferase CobT"/>
    <property type="match status" value="1"/>
</dbReference>
<dbReference type="NCBIfam" id="NF003372">
    <property type="entry name" value="PRK04447.1-5"/>
    <property type="match status" value="1"/>
</dbReference>
<dbReference type="PANTHER" id="PTHR38811">
    <property type="match status" value="1"/>
</dbReference>
<dbReference type="PANTHER" id="PTHR38811:SF1">
    <property type="entry name" value="UPF0284 PROTEIN SLL1500"/>
    <property type="match status" value="1"/>
</dbReference>
<dbReference type="SUPFAM" id="SSF52733">
    <property type="entry name" value="Nicotinate mononucleotide:5,6-dimethylbenzimidazole phosphoribosyltransferase (CobT)"/>
    <property type="match status" value="1"/>
</dbReference>
<feature type="chain" id="PRO_0000151054" description="UPF0284 protein MTH_1426">
    <location>
        <begin position="1"/>
        <end position="359"/>
    </location>
</feature>
<proteinExistence type="inferred from homology"/>
<organism>
    <name type="scientific">Methanothermobacter thermautotrophicus (strain ATCC 29096 / DSM 1053 / JCM 10044 / NBRC 100330 / Delta H)</name>
    <name type="common">Methanobacterium thermoautotrophicum</name>
    <dbReference type="NCBI Taxonomy" id="187420"/>
    <lineage>
        <taxon>Archaea</taxon>
        <taxon>Methanobacteriati</taxon>
        <taxon>Methanobacteriota</taxon>
        <taxon>Methanomada group</taxon>
        <taxon>Methanobacteria</taxon>
        <taxon>Methanobacteriales</taxon>
        <taxon>Methanobacteriaceae</taxon>
        <taxon>Methanothermobacter</taxon>
    </lineage>
</organism>
<gene>
    <name type="ordered locus">MTH_1426</name>
</gene>
<comment type="similarity">
    <text evidence="1">Belongs to the UPF0284 family.</text>
</comment>
<accession>O27477</accession>